<dbReference type="EC" id="6.3.2.6" evidence="1"/>
<dbReference type="EMBL" id="CP000316">
    <property type="protein sequence ID" value="ABE46512.1"/>
    <property type="molecule type" value="Genomic_DNA"/>
</dbReference>
<dbReference type="RefSeq" id="WP_011485499.1">
    <property type="nucleotide sequence ID" value="NC_007948.1"/>
</dbReference>
<dbReference type="SMR" id="Q122N0"/>
<dbReference type="STRING" id="296591.Bpro_4629"/>
<dbReference type="KEGG" id="pol:Bpro_4629"/>
<dbReference type="eggNOG" id="COG0152">
    <property type="taxonomic scope" value="Bacteria"/>
</dbReference>
<dbReference type="HOGENOM" id="CLU_045637_0_0_4"/>
<dbReference type="OrthoDB" id="9801549at2"/>
<dbReference type="UniPathway" id="UPA00074">
    <property type="reaction ID" value="UER00131"/>
</dbReference>
<dbReference type="Proteomes" id="UP000001983">
    <property type="component" value="Chromosome"/>
</dbReference>
<dbReference type="GO" id="GO:0005737">
    <property type="term" value="C:cytoplasm"/>
    <property type="evidence" value="ECO:0007669"/>
    <property type="project" value="TreeGrafter"/>
</dbReference>
<dbReference type="GO" id="GO:0005524">
    <property type="term" value="F:ATP binding"/>
    <property type="evidence" value="ECO:0007669"/>
    <property type="project" value="UniProtKB-KW"/>
</dbReference>
<dbReference type="GO" id="GO:0004639">
    <property type="term" value="F:phosphoribosylaminoimidazolesuccinocarboxamide synthase activity"/>
    <property type="evidence" value="ECO:0007669"/>
    <property type="project" value="UniProtKB-UniRule"/>
</dbReference>
<dbReference type="GO" id="GO:0006189">
    <property type="term" value="P:'de novo' IMP biosynthetic process"/>
    <property type="evidence" value="ECO:0007669"/>
    <property type="project" value="UniProtKB-UniRule"/>
</dbReference>
<dbReference type="CDD" id="cd01414">
    <property type="entry name" value="SAICAR_synt_Sc"/>
    <property type="match status" value="1"/>
</dbReference>
<dbReference type="FunFam" id="3.30.470.20:FF:000015">
    <property type="entry name" value="Phosphoribosylaminoimidazole-succinocarboxamide synthase"/>
    <property type="match status" value="1"/>
</dbReference>
<dbReference type="Gene3D" id="3.30.470.20">
    <property type="entry name" value="ATP-grasp fold, B domain"/>
    <property type="match status" value="1"/>
</dbReference>
<dbReference type="Gene3D" id="3.30.200.20">
    <property type="entry name" value="Phosphorylase Kinase, domain 1"/>
    <property type="match status" value="1"/>
</dbReference>
<dbReference type="HAMAP" id="MF_00137">
    <property type="entry name" value="SAICAR_synth"/>
    <property type="match status" value="1"/>
</dbReference>
<dbReference type="InterPro" id="IPR028923">
    <property type="entry name" value="SAICAR_synt/ADE2_N"/>
</dbReference>
<dbReference type="InterPro" id="IPR001636">
    <property type="entry name" value="SAICAR_synth"/>
</dbReference>
<dbReference type="InterPro" id="IPR018236">
    <property type="entry name" value="SAICAR_synthetase_CS"/>
</dbReference>
<dbReference type="NCBIfam" id="NF010568">
    <property type="entry name" value="PRK13961.1"/>
    <property type="match status" value="1"/>
</dbReference>
<dbReference type="NCBIfam" id="TIGR00081">
    <property type="entry name" value="purC"/>
    <property type="match status" value="1"/>
</dbReference>
<dbReference type="PANTHER" id="PTHR43700">
    <property type="entry name" value="PHOSPHORIBOSYLAMINOIMIDAZOLE-SUCCINOCARBOXAMIDE SYNTHASE"/>
    <property type="match status" value="1"/>
</dbReference>
<dbReference type="PANTHER" id="PTHR43700:SF1">
    <property type="entry name" value="PHOSPHORIBOSYLAMINOIMIDAZOLE-SUCCINOCARBOXAMIDE SYNTHASE"/>
    <property type="match status" value="1"/>
</dbReference>
<dbReference type="Pfam" id="PF01259">
    <property type="entry name" value="SAICAR_synt"/>
    <property type="match status" value="1"/>
</dbReference>
<dbReference type="SUPFAM" id="SSF56104">
    <property type="entry name" value="SAICAR synthase-like"/>
    <property type="match status" value="1"/>
</dbReference>
<dbReference type="PROSITE" id="PS01057">
    <property type="entry name" value="SAICAR_SYNTHETASE_1"/>
    <property type="match status" value="1"/>
</dbReference>
<dbReference type="PROSITE" id="PS01058">
    <property type="entry name" value="SAICAR_SYNTHETASE_2"/>
    <property type="match status" value="1"/>
</dbReference>
<sequence length="302" mass="32665">MTAALHTSALTSLPLLARGKVRDNYAVGQDRLLMVASDRLSAFDVILGEPIPGKGALLTQMALFWFAKLGHLCPNHLTGEAPESVVTAAELPQVTGRSMLVKRLKPLPVEAVVRGYLAGSGWKEYQESQSVCGVPLPAGLKNAGKLPEPIFTPAAKAEVGEHDENISYEQVEKVVGPELAAQIKKISIEIYKTAAAFALTKGIIIADTKFEFGLDENGTLTLMDEVLTPDSSRYWPIEGYEAAYAAGLNPPSYDKQFVRDWLEAVRINGKPWDKTPPSPQLPPDVVAKTAAKYQEALTRLAG</sequence>
<accession>Q122N0</accession>
<comment type="catalytic activity">
    <reaction evidence="1">
        <text>5-amino-1-(5-phospho-D-ribosyl)imidazole-4-carboxylate + L-aspartate + ATP = (2S)-2-[5-amino-1-(5-phospho-beta-D-ribosyl)imidazole-4-carboxamido]succinate + ADP + phosphate + 2 H(+)</text>
        <dbReference type="Rhea" id="RHEA:22628"/>
        <dbReference type="ChEBI" id="CHEBI:15378"/>
        <dbReference type="ChEBI" id="CHEBI:29991"/>
        <dbReference type="ChEBI" id="CHEBI:30616"/>
        <dbReference type="ChEBI" id="CHEBI:43474"/>
        <dbReference type="ChEBI" id="CHEBI:58443"/>
        <dbReference type="ChEBI" id="CHEBI:77657"/>
        <dbReference type="ChEBI" id="CHEBI:456216"/>
        <dbReference type="EC" id="6.3.2.6"/>
    </reaction>
</comment>
<comment type="pathway">
    <text evidence="1">Purine metabolism; IMP biosynthesis via de novo pathway; 5-amino-1-(5-phospho-D-ribosyl)imidazole-4-carboxamide from 5-amino-1-(5-phospho-D-ribosyl)imidazole-4-carboxylate: step 1/2.</text>
</comment>
<comment type="similarity">
    <text evidence="1">Belongs to the SAICAR synthetase family.</text>
</comment>
<protein>
    <recommendedName>
        <fullName evidence="1">Phosphoribosylaminoimidazole-succinocarboxamide synthase</fullName>
        <ecNumber evidence="1">6.3.2.6</ecNumber>
    </recommendedName>
    <alternativeName>
        <fullName evidence="1">SAICAR synthetase</fullName>
    </alternativeName>
</protein>
<evidence type="ECO:0000255" key="1">
    <source>
        <dbReference type="HAMAP-Rule" id="MF_00137"/>
    </source>
</evidence>
<reference key="1">
    <citation type="journal article" date="2008" name="Appl. Environ. Microbiol.">
        <title>The genome of Polaromonas sp. strain JS666: insights into the evolution of a hydrocarbon- and xenobiotic-degrading bacterium, and features of relevance to biotechnology.</title>
        <authorList>
            <person name="Mattes T.E."/>
            <person name="Alexander A.K."/>
            <person name="Richardson P.M."/>
            <person name="Munk A.C."/>
            <person name="Han C.S."/>
            <person name="Stothard P."/>
            <person name="Coleman N.V."/>
        </authorList>
    </citation>
    <scope>NUCLEOTIDE SEQUENCE [LARGE SCALE GENOMIC DNA]</scope>
    <source>
        <strain>JS666 / ATCC BAA-500</strain>
    </source>
</reference>
<name>PUR7_POLSJ</name>
<proteinExistence type="inferred from homology"/>
<organism>
    <name type="scientific">Polaromonas sp. (strain JS666 / ATCC BAA-500)</name>
    <dbReference type="NCBI Taxonomy" id="296591"/>
    <lineage>
        <taxon>Bacteria</taxon>
        <taxon>Pseudomonadati</taxon>
        <taxon>Pseudomonadota</taxon>
        <taxon>Betaproteobacteria</taxon>
        <taxon>Burkholderiales</taxon>
        <taxon>Comamonadaceae</taxon>
        <taxon>Polaromonas</taxon>
    </lineage>
</organism>
<gene>
    <name evidence="1" type="primary">purC</name>
    <name type="ordered locus">Bpro_4629</name>
</gene>
<feature type="chain" id="PRO_1000122923" description="Phosphoribosylaminoimidazole-succinocarboxamide synthase">
    <location>
        <begin position="1"/>
        <end position="302"/>
    </location>
</feature>
<keyword id="KW-0067">ATP-binding</keyword>
<keyword id="KW-0436">Ligase</keyword>
<keyword id="KW-0547">Nucleotide-binding</keyword>
<keyword id="KW-0658">Purine biosynthesis</keyword>
<keyword id="KW-1185">Reference proteome</keyword>